<reference key="1">
    <citation type="journal article" date="2010" name="Appl. Environ. Microbiol.">
        <title>Conserved symbiotic plasmid DNA sequences in the multireplicon pangenomic structure of Rhizobium etli.</title>
        <authorList>
            <person name="Gonzalez V."/>
            <person name="Acosta J.L."/>
            <person name="Santamaria R.I."/>
            <person name="Bustos P."/>
            <person name="Fernandez J.L."/>
            <person name="Hernandez Gonzalez I.L."/>
            <person name="Diaz R."/>
            <person name="Flores M."/>
            <person name="Palacios R."/>
            <person name="Mora J."/>
            <person name="Davila G."/>
        </authorList>
    </citation>
    <scope>NUCLEOTIDE SEQUENCE [LARGE SCALE GENOMIC DNA]</scope>
    <source>
        <strain>CIAT 652</strain>
    </source>
</reference>
<feature type="chain" id="PRO_1000193640" description="Gamma-glutamyl phosphate reductase">
    <location>
        <begin position="1"/>
        <end position="427"/>
    </location>
</feature>
<organism>
    <name type="scientific">Rhizobium etli (strain CIAT 652)</name>
    <dbReference type="NCBI Taxonomy" id="491916"/>
    <lineage>
        <taxon>Bacteria</taxon>
        <taxon>Pseudomonadati</taxon>
        <taxon>Pseudomonadota</taxon>
        <taxon>Alphaproteobacteria</taxon>
        <taxon>Hyphomicrobiales</taxon>
        <taxon>Rhizobiaceae</taxon>
        <taxon>Rhizobium/Agrobacterium group</taxon>
        <taxon>Rhizobium</taxon>
    </lineage>
</organism>
<comment type="function">
    <text evidence="1">Catalyzes the NADPH-dependent reduction of L-glutamate 5-phosphate into L-glutamate 5-semialdehyde and phosphate. The product spontaneously undergoes cyclization to form 1-pyrroline-5-carboxylate.</text>
</comment>
<comment type="catalytic activity">
    <reaction evidence="1">
        <text>L-glutamate 5-semialdehyde + phosphate + NADP(+) = L-glutamyl 5-phosphate + NADPH + H(+)</text>
        <dbReference type="Rhea" id="RHEA:19541"/>
        <dbReference type="ChEBI" id="CHEBI:15378"/>
        <dbReference type="ChEBI" id="CHEBI:43474"/>
        <dbReference type="ChEBI" id="CHEBI:57783"/>
        <dbReference type="ChEBI" id="CHEBI:58066"/>
        <dbReference type="ChEBI" id="CHEBI:58274"/>
        <dbReference type="ChEBI" id="CHEBI:58349"/>
        <dbReference type="EC" id="1.2.1.41"/>
    </reaction>
</comment>
<comment type="pathway">
    <text evidence="1">Amino-acid biosynthesis; L-proline biosynthesis; L-glutamate 5-semialdehyde from L-glutamate: step 2/2.</text>
</comment>
<comment type="subcellular location">
    <subcellularLocation>
        <location evidence="1">Cytoplasm</location>
    </subcellularLocation>
</comment>
<comment type="similarity">
    <text evidence="1">Belongs to the gamma-glutamyl phosphate reductase family.</text>
</comment>
<keyword id="KW-0028">Amino-acid biosynthesis</keyword>
<keyword id="KW-0963">Cytoplasm</keyword>
<keyword id="KW-0521">NADP</keyword>
<keyword id="KW-0560">Oxidoreductase</keyword>
<keyword id="KW-0641">Proline biosynthesis</keyword>
<name>PROA_RHIE6</name>
<proteinExistence type="inferred from homology"/>
<accession>B3PRZ5</accession>
<protein>
    <recommendedName>
        <fullName evidence="1">Gamma-glutamyl phosphate reductase</fullName>
        <shortName evidence="1">GPR</shortName>
        <ecNumber evidence="1">1.2.1.41</ecNumber>
    </recommendedName>
    <alternativeName>
        <fullName evidence="1">Glutamate-5-semialdehyde dehydrogenase</fullName>
    </alternativeName>
    <alternativeName>
        <fullName evidence="1">Glutamyl-gamma-semialdehyde dehydrogenase</fullName>
        <shortName evidence="1">GSA dehydrogenase</shortName>
    </alternativeName>
</protein>
<evidence type="ECO:0000255" key="1">
    <source>
        <dbReference type="HAMAP-Rule" id="MF_00412"/>
    </source>
</evidence>
<dbReference type="EC" id="1.2.1.41" evidence="1"/>
<dbReference type="EMBL" id="CP001074">
    <property type="protein sequence ID" value="ACE93285.1"/>
    <property type="molecule type" value="Genomic_DNA"/>
</dbReference>
<dbReference type="SMR" id="B3PRZ5"/>
<dbReference type="KEGG" id="rec:RHECIAT_CH0004358"/>
<dbReference type="eggNOG" id="COG0014">
    <property type="taxonomic scope" value="Bacteria"/>
</dbReference>
<dbReference type="HOGENOM" id="CLU_030231_0_0_5"/>
<dbReference type="UniPathway" id="UPA00098">
    <property type="reaction ID" value="UER00360"/>
</dbReference>
<dbReference type="Proteomes" id="UP000008817">
    <property type="component" value="Chromosome"/>
</dbReference>
<dbReference type="GO" id="GO:0005737">
    <property type="term" value="C:cytoplasm"/>
    <property type="evidence" value="ECO:0007669"/>
    <property type="project" value="UniProtKB-SubCell"/>
</dbReference>
<dbReference type="GO" id="GO:0004350">
    <property type="term" value="F:glutamate-5-semialdehyde dehydrogenase activity"/>
    <property type="evidence" value="ECO:0007669"/>
    <property type="project" value="UniProtKB-UniRule"/>
</dbReference>
<dbReference type="GO" id="GO:0050661">
    <property type="term" value="F:NADP binding"/>
    <property type="evidence" value="ECO:0007669"/>
    <property type="project" value="InterPro"/>
</dbReference>
<dbReference type="GO" id="GO:0055129">
    <property type="term" value="P:L-proline biosynthetic process"/>
    <property type="evidence" value="ECO:0007669"/>
    <property type="project" value="UniProtKB-UniRule"/>
</dbReference>
<dbReference type="CDD" id="cd07079">
    <property type="entry name" value="ALDH_F18-19_ProA-GPR"/>
    <property type="match status" value="1"/>
</dbReference>
<dbReference type="Gene3D" id="3.40.605.10">
    <property type="entry name" value="Aldehyde Dehydrogenase, Chain A, domain 1"/>
    <property type="match status" value="1"/>
</dbReference>
<dbReference type="Gene3D" id="3.40.309.10">
    <property type="entry name" value="Aldehyde Dehydrogenase, Chain A, domain 2"/>
    <property type="match status" value="1"/>
</dbReference>
<dbReference type="HAMAP" id="MF_00412">
    <property type="entry name" value="ProA"/>
    <property type="match status" value="1"/>
</dbReference>
<dbReference type="InterPro" id="IPR016161">
    <property type="entry name" value="Ald_DH/histidinol_DH"/>
</dbReference>
<dbReference type="InterPro" id="IPR016163">
    <property type="entry name" value="Ald_DH_C"/>
</dbReference>
<dbReference type="InterPro" id="IPR016162">
    <property type="entry name" value="Ald_DH_N"/>
</dbReference>
<dbReference type="InterPro" id="IPR015590">
    <property type="entry name" value="Aldehyde_DH_dom"/>
</dbReference>
<dbReference type="InterPro" id="IPR020593">
    <property type="entry name" value="G-glutamylP_reductase_CS"/>
</dbReference>
<dbReference type="InterPro" id="IPR012134">
    <property type="entry name" value="Glu-5-SA_DH"/>
</dbReference>
<dbReference type="InterPro" id="IPR000965">
    <property type="entry name" value="GPR_dom"/>
</dbReference>
<dbReference type="NCBIfam" id="NF001221">
    <property type="entry name" value="PRK00197.1"/>
    <property type="match status" value="1"/>
</dbReference>
<dbReference type="NCBIfam" id="TIGR00407">
    <property type="entry name" value="proA"/>
    <property type="match status" value="1"/>
</dbReference>
<dbReference type="PANTHER" id="PTHR11063:SF8">
    <property type="entry name" value="DELTA-1-PYRROLINE-5-CARBOXYLATE SYNTHASE"/>
    <property type="match status" value="1"/>
</dbReference>
<dbReference type="PANTHER" id="PTHR11063">
    <property type="entry name" value="GLUTAMATE SEMIALDEHYDE DEHYDROGENASE"/>
    <property type="match status" value="1"/>
</dbReference>
<dbReference type="Pfam" id="PF00171">
    <property type="entry name" value="Aldedh"/>
    <property type="match status" value="1"/>
</dbReference>
<dbReference type="PIRSF" id="PIRSF000151">
    <property type="entry name" value="GPR"/>
    <property type="match status" value="1"/>
</dbReference>
<dbReference type="SUPFAM" id="SSF53720">
    <property type="entry name" value="ALDH-like"/>
    <property type="match status" value="1"/>
</dbReference>
<dbReference type="PROSITE" id="PS01223">
    <property type="entry name" value="PROA"/>
    <property type="match status" value="1"/>
</dbReference>
<sequence>MLDTVTLSPDIDALMNDIGRKAKAAARPLGFASTEAKNRALNAMADAILANSAHILAENAKDLKDVEGSEMLASFIDRLTLSDKRIAEMAEGIRAIAALADPVGEVIAAWDRPNGLKIERVRTPLGVIGVIFESRPNVTADAGALCLKAGNAVILRCGSDSRRSSQAIHACMVDGLKAARLPEHAIQLVPVTDRAAVGAMLRGLDGSIDVIVPRGGKSLVARVQSEARVPVFAHLEGLCHIYVDASADIEMAKKIVVNAKMRRTGICGAAETLLVDGAAIGTHLTPLLDVLTEAGCEIRGSAAVLKVAPGIKPATEEDWTTEYLDAIISVAVVDGISGAIAHIQTYSSNHTEAVIAEDPAVVERFFTEVDSAILLHNASTQFADGGEFGMGAEIGIATGKMHARGPVGVEQLTSFKYRVRGAGQTRP</sequence>
<gene>
    <name evidence="1" type="primary">proA</name>
    <name type="ordered locus">RHECIAT_CH0004358</name>
</gene>